<name>PRP5_BOTFB</name>
<dbReference type="EC" id="3.6.4.13"/>
<dbReference type="EMBL" id="CP009815">
    <property type="protein sequence ID" value="ATZ55024.1"/>
    <property type="molecule type" value="Genomic_DNA"/>
</dbReference>
<dbReference type="SMR" id="A6RW79"/>
<dbReference type="EnsemblFungi" id="Bcin11g03310.1">
    <property type="protein sequence ID" value="Bcin11p03310.1"/>
    <property type="gene ID" value="Bcin11g03310"/>
</dbReference>
<dbReference type="VEuPathDB" id="FungiDB:Bcin11g03310"/>
<dbReference type="OrthoDB" id="196131at2759"/>
<dbReference type="Proteomes" id="UP000001798">
    <property type="component" value="Chromosome bcin11"/>
</dbReference>
<dbReference type="GO" id="GO:0005634">
    <property type="term" value="C:nucleus"/>
    <property type="evidence" value="ECO:0007669"/>
    <property type="project" value="UniProtKB-SubCell"/>
</dbReference>
<dbReference type="GO" id="GO:0005524">
    <property type="term" value="F:ATP binding"/>
    <property type="evidence" value="ECO:0007669"/>
    <property type="project" value="UniProtKB-KW"/>
</dbReference>
<dbReference type="GO" id="GO:0016887">
    <property type="term" value="F:ATP hydrolysis activity"/>
    <property type="evidence" value="ECO:0007669"/>
    <property type="project" value="RHEA"/>
</dbReference>
<dbReference type="GO" id="GO:0003676">
    <property type="term" value="F:nucleic acid binding"/>
    <property type="evidence" value="ECO:0007669"/>
    <property type="project" value="InterPro"/>
</dbReference>
<dbReference type="GO" id="GO:0003724">
    <property type="term" value="F:RNA helicase activity"/>
    <property type="evidence" value="ECO:0007669"/>
    <property type="project" value="UniProtKB-EC"/>
</dbReference>
<dbReference type="GO" id="GO:0006397">
    <property type="term" value="P:mRNA processing"/>
    <property type="evidence" value="ECO:0007669"/>
    <property type="project" value="UniProtKB-KW"/>
</dbReference>
<dbReference type="GO" id="GO:0008380">
    <property type="term" value="P:RNA splicing"/>
    <property type="evidence" value="ECO:0007669"/>
    <property type="project" value="UniProtKB-KW"/>
</dbReference>
<dbReference type="CDD" id="cd17953">
    <property type="entry name" value="DEADc_DDX46"/>
    <property type="match status" value="1"/>
</dbReference>
<dbReference type="CDD" id="cd18787">
    <property type="entry name" value="SF2_C_DEAD"/>
    <property type="match status" value="1"/>
</dbReference>
<dbReference type="FunFam" id="3.40.50.300:FF:000008">
    <property type="entry name" value="ATP-dependent RNA helicase RhlB"/>
    <property type="match status" value="1"/>
</dbReference>
<dbReference type="FunFam" id="3.40.50.300:FF:000079">
    <property type="entry name" value="probable ATP-dependent RNA helicase DDX17"/>
    <property type="match status" value="1"/>
</dbReference>
<dbReference type="Gene3D" id="3.40.50.300">
    <property type="entry name" value="P-loop containing nucleotide triphosphate hydrolases"/>
    <property type="match status" value="2"/>
</dbReference>
<dbReference type="InterPro" id="IPR011545">
    <property type="entry name" value="DEAD/DEAH_box_helicase_dom"/>
</dbReference>
<dbReference type="InterPro" id="IPR014001">
    <property type="entry name" value="Helicase_ATP-bd"/>
</dbReference>
<dbReference type="InterPro" id="IPR001650">
    <property type="entry name" value="Helicase_C-like"/>
</dbReference>
<dbReference type="InterPro" id="IPR027417">
    <property type="entry name" value="P-loop_NTPase"/>
</dbReference>
<dbReference type="InterPro" id="IPR056149">
    <property type="entry name" value="PRP5/DDX46/KHDC4_KH"/>
</dbReference>
<dbReference type="InterPro" id="IPR000629">
    <property type="entry name" value="RNA-helicase_DEAD-box_CS"/>
</dbReference>
<dbReference type="InterPro" id="IPR014014">
    <property type="entry name" value="RNA_helicase_DEAD_Q_motif"/>
</dbReference>
<dbReference type="PANTHER" id="PTHR47958">
    <property type="entry name" value="ATP-DEPENDENT RNA HELICASE DBP3"/>
    <property type="match status" value="1"/>
</dbReference>
<dbReference type="Pfam" id="PF00270">
    <property type="entry name" value="DEAD"/>
    <property type="match status" value="1"/>
</dbReference>
<dbReference type="Pfam" id="PF00271">
    <property type="entry name" value="Helicase_C"/>
    <property type="match status" value="1"/>
</dbReference>
<dbReference type="Pfam" id="PF23469">
    <property type="entry name" value="KH_12"/>
    <property type="match status" value="1"/>
</dbReference>
<dbReference type="SMART" id="SM00487">
    <property type="entry name" value="DEXDc"/>
    <property type="match status" value="1"/>
</dbReference>
<dbReference type="SMART" id="SM00490">
    <property type="entry name" value="HELICc"/>
    <property type="match status" value="1"/>
</dbReference>
<dbReference type="SUPFAM" id="SSF52540">
    <property type="entry name" value="P-loop containing nucleoside triphosphate hydrolases"/>
    <property type="match status" value="1"/>
</dbReference>
<dbReference type="PROSITE" id="PS00039">
    <property type="entry name" value="DEAD_ATP_HELICASE"/>
    <property type="match status" value="1"/>
</dbReference>
<dbReference type="PROSITE" id="PS51192">
    <property type="entry name" value="HELICASE_ATP_BIND_1"/>
    <property type="match status" value="1"/>
</dbReference>
<dbReference type="PROSITE" id="PS51194">
    <property type="entry name" value="HELICASE_CTER"/>
    <property type="match status" value="1"/>
</dbReference>
<dbReference type="PROSITE" id="PS51195">
    <property type="entry name" value="Q_MOTIF"/>
    <property type="match status" value="1"/>
</dbReference>
<organism>
    <name type="scientific">Botryotinia fuckeliana (strain B05.10)</name>
    <name type="common">Noble rot fungus</name>
    <name type="synonym">Botrytis cinerea</name>
    <dbReference type="NCBI Taxonomy" id="332648"/>
    <lineage>
        <taxon>Eukaryota</taxon>
        <taxon>Fungi</taxon>
        <taxon>Dikarya</taxon>
        <taxon>Ascomycota</taxon>
        <taxon>Pezizomycotina</taxon>
        <taxon>Leotiomycetes</taxon>
        <taxon>Helotiales</taxon>
        <taxon>Sclerotiniaceae</taxon>
        <taxon>Botrytis</taxon>
    </lineage>
</organism>
<keyword id="KW-0067">ATP-binding</keyword>
<keyword id="KW-0347">Helicase</keyword>
<keyword id="KW-0378">Hydrolase</keyword>
<keyword id="KW-0507">mRNA processing</keyword>
<keyword id="KW-0508">mRNA splicing</keyword>
<keyword id="KW-0547">Nucleotide-binding</keyword>
<keyword id="KW-0539">Nucleus</keyword>
<keyword id="KW-1185">Reference proteome</keyword>
<reference key="1">
    <citation type="journal article" date="2011" name="PLoS Genet.">
        <title>Genomic analysis of the necrotrophic fungal pathogens Sclerotinia sclerotiorum and Botrytis cinerea.</title>
        <authorList>
            <person name="Amselem J."/>
            <person name="Cuomo C.A."/>
            <person name="van Kan J.A.L."/>
            <person name="Viaud M."/>
            <person name="Benito E.P."/>
            <person name="Couloux A."/>
            <person name="Coutinho P.M."/>
            <person name="de Vries R.P."/>
            <person name="Dyer P.S."/>
            <person name="Fillinger S."/>
            <person name="Fournier E."/>
            <person name="Gout L."/>
            <person name="Hahn M."/>
            <person name="Kohn L."/>
            <person name="Lapalu N."/>
            <person name="Plummer K.M."/>
            <person name="Pradier J.-M."/>
            <person name="Quevillon E."/>
            <person name="Sharon A."/>
            <person name="Simon A."/>
            <person name="ten Have A."/>
            <person name="Tudzynski B."/>
            <person name="Tudzynski P."/>
            <person name="Wincker P."/>
            <person name="Andrew M."/>
            <person name="Anthouard V."/>
            <person name="Beever R.E."/>
            <person name="Beffa R."/>
            <person name="Benoit I."/>
            <person name="Bouzid O."/>
            <person name="Brault B."/>
            <person name="Chen Z."/>
            <person name="Choquer M."/>
            <person name="Collemare J."/>
            <person name="Cotton P."/>
            <person name="Danchin E.G."/>
            <person name="Da Silva C."/>
            <person name="Gautier A."/>
            <person name="Giraud C."/>
            <person name="Giraud T."/>
            <person name="Gonzalez C."/>
            <person name="Grossetete S."/>
            <person name="Gueldener U."/>
            <person name="Henrissat B."/>
            <person name="Howlett B.J."/>
            <person name="Kodira C."/>
            <person name="Kretschmer M."/>
            <person name="Lappartient A."/>
            <person name="Leroch M."/>
            <person name="Levis C."/>
            <person name="Mauceli E."/>
            <person name="Neuveglise C."/>
            <person name="Oeser B."/>
            <person name="Pearson M."/>
            <person name="Poulain J."/>
            <person name="Poussereau N."/>
            <person name="Quesneville H."/>
            <person name="Rascle C."/>
            <person name="Schumacher J."/>
            <person name="Segurens B."/>
            <person name="Sexton A."/>
            <person name="Silva E."/>
            <person name="Sirven C."/>
            <person name="Soanes D.M."/>
            <person name="Talbot N.J."/>
            <person name="Templeton M."/>
            <person name="Yandava C."/>
            <person name="Yarden O."/>
            <person name="Zeng Q."/>
            <person name="Rollins J.A."/>
            <person name="Lebrun M.-H."/>
            <person name="Dickman M."/>
        </authorList>
    </citation>
    <scope>NUCLEOTIDE SEQUENCE [LARGE SCALE GENOMIC DNA]</scope>
    <source>
        <strain>B05.10</strain>
    </source>
</reference>
<reference key="2">
    <citation type="journal article" date="2012" name="Eukaryot. Cell">
        <title>Genome update of Botrytis cinerea strains B05.10 and T4.</title>
        <authorList>
            <person name="Staats M."/>
            <person name="van Kan J.A.L."/>
        </authorList>
    </citation>
    <scope>NUCLEOTIDE SEQUENCE [LARGE SCALE GENOMIC DNA]</scope>
    <scope>GENOME REANNOTATION</scope>
    <source>
        <strain>B05.10</strain>
    </source>
</reference>
<reference key="3">
    <citation type="journal article" date="2017" name="Mol. Plant Pathol.">
        <title>A gapless genome sequence of the fungus Botrytis cinerea.</title>
        <authorList>
            <person name="van Kan J.A.L."/>
            <person name="Stassen J.H.M."/>
            <person name="Mosbach A."/>
            <person name="van der Lee T.A.J."/>
            <person name="Faino L."/>
            <person name="Farmer A.D."/>
            <person name="Papasotiriou D.G."/>
            <person name="Zhou S."/>
            <person name="Seidl M.F."/>
            <person name="Cottam E."/>
            <person name="Edel D."/>
            <person name="Hahn M."/>
            <person name="Schwartz D.C."/>
            <person name="Dietrich R.A."/>
            <person name="Widdison S."/>
            <person name="Scalliet G."/>
        </authorList>
    </citation>
    <scope>NUCLEOTIDE SEQUENCE [LARGE SCALE GENOMIC DNA]</scope>
    <scope>GENOME REANNOTATION</scope>
    <source>
        <strain>B05.10</strain>
    </source>
</reference>
<sequence length="1179" mass="130382">MARHRDSRSPSPTGSHHSSRRNRRDDNGRRDRDRRDDVRGQRRSRSPDRRERDRDMNRRRDRSVGRLNDDYHRSGRRERSRDRRSYADRERSPDRRRRRSRERDYRDRRDDSYDDRARRRREDSTDSWSRSRGDETRGQTPRSDAGAKVNDAPKVSTPAVQTEEQKKAERLAKLEAWKKKMAEDKERKEKELAAGGTRKLLDAIDQKANGSPSLTSPNSPTTPATPATPGDLAPPTNYAGKFDPKAIAKKAVASSSSAHTLGKDLPLKELSKASATLTSTVKGLQADKKPTAFSSTSKVSALPKTRGNLSVFGLGAKVTDNEKTSQKRALDFDEDEGSRKKLEKLPSLPMANTEEDDAALANGVEEQDDDDDADLEAAGTEEEAAAAARAAAEKREERLQEAEAQPHTNGDVQMEDAPQPDSTAMDEDEEIDPLDAFMEEMGDPFSLPKNNATFIKDNIKSQPQEPEPLFGDDDVDLKALDADPDEILAIANKARKKKDIPTINYSALDLPPFRKNFYTEPTELAEMTEAEIADLRLELDGIKVAGKDVPKPVQKWSQCGLDVKSLDVITKLGYERPTSIQMQAIPAIMSGRDVIGVAKTGSGKTIAFLLPMFRHIRDQRPLKGSDGPIGLIMTPTRELATQIHKECKPFLKAMGLRAVCAYGGAIIKDQIADLKRGAEIIVCTPGRMIELLAANSGRVTNLQRVTYVVLDEADRMFDMGFEPQVMKVFNNIRPNRQTILFSATMPRIMDALAKKTLQSPVEIVVGGRSVVAPEITQIVEVREEKEKFHRLLELLGELYNTDEDARTLIFVDRQEKADDLLKDLMRKGYPCMSIHGGKDQVDRDSTIDDFKAGVVPIMIATSVAARGLDVKQLKLVVNFDAPNHLEDYVHRAGRTGRAGNTGTAVTFITEEQEQYSVGIAKALEQSGQEVPDRLNEMRKSYKDKVKSGAKKESSGFGGKGLERFDAEREATKARERKIHKIGGDDDEEEKEEKDDDVLLKAASVVQPAASTAPPKLLGVPKGIDLDGDIKVHRTEPAATTGSKLDKVTSAIDAINARLNKTGQLRSGVPIDNKGPDAGAFHATLEINDFPQKARWAVTNRTNVAKILEATGTSITTKGSFYPAGKEVQADPKLYILVEGDTEVVVTNAMRELMRLLKEGTMAAADAEGRAPVGGRYTVT</sequence>
<evidence type="ECO:0000250" key="1"/>
<evidence type="ECO:0000255" key="2">
    <source>
        <dbReference type="PROSITE-ProRule" id="PRU00541"/>
    </source>
</evidence>
<evidence type="ECO:0000255" key="3">
    <source>
        <dbReference type="PROSITE-ProRule" id="PRU00542"/>
    </source>
</evidence>
<evidence type="ECO:0000256" key="4">
    <source>
        <dbReference type="SAM" id="MobiDB-lite"/>
    </source>
</evidence>
<evidence type="ECO:0000305" key="5"/>
<accession>A6RW79</accession>
<accession>A0A384JXE9</accession>
<feature type="chain" id="PRO_0000310226" description="Pre-mRNA-processing ATP-dependent RNA helicase prp5">
    <location>
        <begin position="1"/>
        <end position="1179"/>
    </location>
</feature>
<feature type="domain" description="Helicase ATP-binding" evidence="2">
    <location>
        <begin position="585"/>
        <end position="763"/>
    </location>
</feature>
<feature type="domain" description="Helicase C-terminal" evidence="3">
    <location>
        <begin position="774"/>
        <end position="938"/>
    </location>
</feature>
<feature type="region of interest" description="Disordered" evidence="4">
    <location>
        <begin position="1"/>
        <end position="167"/>
    </location>
</feature>
<feature type="region of interest" description="Disordered" evidence="4">
    <location>
        <begin position="180"/>
        <end position="241"/>
    </location>
</feature>
<feature type="region of interest" description="Disordered" evidence="4">
    <location>
        <begin position="250"/>
        <end position="269"/>
    </location>
</feature>
<feature type="region of interest" description="Disordered" evidence="4">
    <location>
        <begin position="318"/>
        <end position="427"/>
    </location>
</feature>
<feature type="region of interest" description="Disordered" evidence="4">
    <location>
        <begin position="941"/>
        <end position="994"/>
    </location>
</feature>
<feature type="short sequence motif" description="Q motif">
    <location>
        <begin position="554"/>
        <end position="582"/>
    </location>
</feature>
<feature type="short sequence motif" description="DEAD box">
    <location>
        <begin position="711"/>
        <end position="714"/>
    </location>
</feature>
<feature type="compositionally biased region" description="Basic and acidic residues" evidence="4">
    <location>
        <begin position="23"/>
        <end position="93"/>
    </location>
</feature>
<feature type="compositionally biased region" description="Basic and acidic residues" evidence="4">
    <location>
        <begin position="101"/>
        <end position="137"/>
    </location>
</feature>
<feature type="compositionally biased region" description="Basic and acidic residues" evidence="4">
    <location>
        <begin position="180"/>
        <end position="192"/>
    </location>
</feature>
<feature type="compositionally biased region" description="Low complexity" evidence="4">
    <location>
        <begin position="209"/>
        <end position="236"/>
    </location>
</feature>
<feature type="compositionally biased region" description="Basic and acidic residues" evidence="4">
    <location>
        <begin position="319"/>
        <end position="344"/>
    </location>
</feature>
<feature type="compositionally biased region" description="Acidic residues" evidence="4">
    <location>
        <begin position="365"/>
        <end position="384"/>
    </location>
</feature>
<feature type="compositionally biased region" description="Basic and acidic residues" evidence="4">
    <location>
        <begin position="391"/>
        <end position="401"/>
    </location>
</feature>
<feature type="compositionally biased region" description="Basic and acidic residues" evidence="4">
    <location>
        <begin position="941"/>
        <end position="953"/>
    </location>
</feature>
<feature type="compositionally biased region" description="Basic and acidic residues" evidence="4">
    <location>
        <begin position="960"/>
        <end position="973"/>
    </location>
</feature>
<feature type="compositionally biased region" description="Acidic residues" evidence="4">
    <location>
        <begin position="984"/>
        <end position="994"/>
    </location>
</feature>
<feature type="binding site" evidence="2">
    <location>
        <begin position="598"/>
        <end position="605"/>
    </location>
    <ligand>
        <name>ATP</name>
        <dbReference type="ChEBI" id="CHEBI:30616"/>
    </ligand>
</feature>
<comment type="function">
    <text evidence="1">ATP-dependent RNA helicase involved spliceosome assembly and in nuclear splicing. Catalyzes an ATP-dependent conformational change of U2 snRNP. Bridges U1 and U2 snRNPs and enables stable U2 snRNP association with intron RNA (By similarity).</text>
</comment>
<comment type="catalytic activity">
    <reaction>
        <text>ATP + H2O = ADP + phosphate + H(+)</text>
        <dbReference type="Rhea" id="RHEA:13065"/>
        <dbReference type="ChEBI" id="CHEBI:15377"/>
        <dbReference type="ChEBI" id="CHEBI:15378"/>
        <dbReference type="ChEBI" id="CHEBI:30616"/>
        <dbReference type="ChEBI" id="CHEBI:43474"/>
        <dbReference type="ChEBI" id="CHEBI:456216"/>
        <dbReference type="EC" id="3.6.4.13"/>
    </reaction>
</comment>
<comment type="subcellular location">
    <subcellularLocation>
        <location evidence="1">Nucleus</location>
    </subcellularLocation>
</comment>
<comment type="domain">
    <text>The Q motif is unique to and characteristic of the DEAD box family of RNA helicases and controls ATP binding and hydrolysis.</text>
</comment>
<comment type="similarity">
    <text evidence="5">Belongs to the DEAD box helicase family. DDX46/PRP5 subfamily.</text>
</comment>
<proteinExistence type="inferred from homology"/>
<gene>
    <name type="primary">prp5</name>
    <name type="ORF">BC1G_04866</name>
    <name type="ORF">BCIN_11g03310</name>
</gene>
<protein>
    <recommendedName>
        <fullName>Pre-mRNA-processing ATP-dependent RNA helicase prp5</fullName>
        <ecNumber>3.6.4.13</ecNumber>
    </recommendedName>
</protein>